<sequence length="252" mass="28221">MNIQLICETENSQNFTALCKEKGLTHDPASVLALVQTETDGEVRLELRKLDEPKLGAVYVDFVAGTMAHRRKFGGGRGEAIAKAVGVKGNELPSVIDATAGLGRDAFVLASIGCRVRLVERHPVVYLLLQDGLRRAYADPEIGEMMQKNMQLLPVHHITELNPFEDFADVVYLDPMYPHKQKSALVKKEMRVFQYLVGADSDSNLLLEPALKLAKKRVVVKRPDYAEFLAEKAPQFSRETKNHRFDIYSVNV</sequence>
<proteinExistence type="inferred from homology"/>
<reference key="1">
    <citation type="journal article" date="2004" name="Nat. Biotechnol.">
        <title>The genome sequence of the capnophilic rumen bacterium Mannheimia succiniciproducens.</title>
        <authorList>
            <person name="Hong S.H."/>
            <person name="Kim J.S."/>
            <person name="Lee S.Y."/>
            <person name="In Y.H."/>
            <person name="Choi S.S."/>
            <person name="Rih J.-K."/>
            <person name="Kim C.H."/>
            <person name="Jeong H."/>
            <person name="Hur C.G."/>
            <person name="Kim J.J."/>
        </authorList>
    </citation>
    <scope>NUCLEOTIDE SEQUENCE [LARGE SCALE GENOMIC DNA]</scope>
    <source>
        <strain>KCTC 0769BP / MBEL55E</strain>
    </source>
</reference>
<gene>
    <name evidence="1" type="primary">rsmJ</name>
    <name type="ordered locus">MS2368</name>
</gene>
<feature type="chain" id="PRO_0000212075" description="Ribosomal RNA small subunit methyltransferase J">
    <location>
        <begin position="1"/>
        <end position="252"/>
    </location>
</feature>
<feature type="binding site" evidence="1">
    <location>
        <begin position="104"/>
        <end position="105"/>
    </location>
    <ligand>
        <name>S-adenosyl-L-methionine</name>
        <dbReference type="ChEBI" id="CHEBI:59789"/>
    </ligand>
</feature>
<feature type="binding site" evidence="1">
    <location>
        <begin position="120"/>
        <end position="121"/>
    </location>
    <ligand>
        <name>S-adenosyl-L-methionine</name>
        <dbReference type="ChEBI" id="CHEBI:59789"/>
    </ligand>
</feature>
<feature type="binding site" evidence="1">
    <location>
        <position position="174"/>
    </location>
    <ligand>
        <name>S-adenosyl-L-methionine</name>
        <dbReference type="ChEBI" id="CHEBI:59789"/>
    </ligand>
</feature>
<organism>
    <name type="scientific">Mannheimia succiniciproducens (strain KCTC 0769BP / MBEL55E)</name>
    <dbReference type="NCBI Taxonomy" id="221988"/>
    <lineage>
        <taxon>Bacteria</taxon>
        <taxon>Pseudomonadati</taxon>
        <taxon>Pseudomonadota</taxon>
        <taxon>Gammaproteobacteria</taxon>
        <taxon>Pasteurellales</taxon>
        <taxon>Pasteurellaceae</taxon>
        <taxon>Basfia</taxon>
    </lineage>
</organism>
<accession>Q65PY5</accession>
<keyword id="KW-0963">Cytoplasm</keyword>
<keyword id="KW-0489">Methyltransferase</keyword>
<keyword id="KW-0698">rRNA processing</keyword>
<keyword id="KW-0949">S-adenosyl-L-methionine</keyword>
<keyword id="KW-0808">Transferase</keyword>
<name>RSMJ_MANSM</name>
<protein>
    <recommendedName>
        <fullName evidence="1">Ribosomal RNA small subunit methyltransferase J</fullName>
        <ecNumber evidence="1">2.1.1.242</ecNumber>
    </recommendedName>
    <alternativeName>
        <fullName evidence="1">16S rRNA m2G1516 methyltransferase</fullName>
    </alternativeName>
    <alternativeName>
        <fullName evidence="1">rRNA (guanine-N(2)-)-methyltransferase</fullName>
    </alternativeName>
</protein>
<evidence type="ECO:0000255" key="1">
    <source>
        <dbReference type="HAMAP-Rule" id="MF_01523"/>
    </source>
</evidence>
<dbReference type="EC" id="2.1.1.242" evidence="1"/>
<dbReference type="EMBL" id="AE016827">
    <property type="protein sequence ID" value="AAU38975.1"/>
    <property type="molecule type" value="Genomic_DNA"/>
</dbReference>
<dbReference type="RefSeq" id="WP_011201513.1">
    <property type="nucleotide sequence ID" value="NC_006300.1"/>
</dbReference>
<dbReference type="SMR" id="Q65PY5"/>
<dbReference type="STRING" id="221988.MS2368"/>
<dbReference type="KEGG" id="msu:MS2368"/>
<dbReference type="eggNOG" id="COG0742">
    <property type="taxonomic scope" value="Bacteria"/>
</dbReference>
<dbReference type="HOGENOM" id="CLU_076324_0_0_6"/>
<dbReference type="OrthoDB" id="3191794at2"/>
<dbReference type="Proteomes" id="UP000000607">
    <property type="component" value="Chromosome"/>
</dbReference>
<dbReference type="GO" id="GO:0005737">
    <property type="term" value="C:cytoplasm"/>
    <property type="evidence" value="ECO:0007669"/>
    <property type="project" value="UniProtKB-SubCell"/>
</dbReference>
<dbReference type="GO" id="GO:0008990">
    <property type="term" value="F:rRNA (guanine-N2-)-methyltransferase activity"/>
    <property type="evidence" value="ECO:0007669"/>
    <property type="project" value="UniProtKB-UniRule"/>
</dbReference>
<dbReference type="Gene3D" id="3.40.50.150">
    <property type="entry name" value="Vaccinia Virus protein VP39"/>
    <property type="match status" value="1"/>
</dbReference>
<dbReference type="Gene3D" id="3.40.1630.10">
    <property type="entry name" value="YhiQ-like domain"/>
    <property type="match status" value="1"/>
</dbReference>
<dbReference type="HAMAP" id="MF_01523">
    <property type="entry name" value="16SrRNA_methyltr_J"/>
    <property type="match status" value="1"/>
</dbReference>
<dbReference type="InterPro" id="IPR007536">
    <property type="entry name" value="16SrRNA_methylTrfase_J"/>
</dbReference>
<dbReference type="InterPro" id="IPR029063">
    <property type="entry name" value="SAM-dependent_MTases_sf"/>
</dbReference>
<dbReference type="PANTHER" id="PTHR36112">
    <property type="entry name" value="RIBOSOMAL RNA SMALL SUBUNIT METHYLTRANSFERASE J"/>
    <property type="match status" value="1"/>
</dbReference>
<dbReference type="PANTHER" id="PTHR36112:SF1">
    <property type="entry name" value="RIBOSOMAL RNA SMALL SUBUNIT METHYLTRANSFERASE J"/>
    <property type="match status" value="1"/>
</dbReference>
<dbReference type="Pfam" id="PF04445">
    <property type="entry name" value="SAM_MT"/>
    <property type="match status" value="1"/>
</dbReference>
<dbReference type="SUPFAM" id="SSF53335">
    <property type="entry name" value="S-adenosyl-L-methionine-dependent methyltransferases"/>
    <property type="match status" value="1"/>
</dbReference>
<comment type="function">
    <text evidence="1">Specifically methylates the guanosine in position 1516 of 16S rRNA.</text>
</comment>
<comment type="catalytic activity">
    <reaction evidence="1">
        <text>guanosine(1516) in 16S rRNA + S-adenosyl-L-methionine = N(2)-methylguanosine(1516) in 16S rRNA + S-adenosyl-L-homocysteine + H(+)</text>
        <dbReference type="Rhea" id="RHEA:43220"/>
        <dbReference type="Rhea" id="RHEA-COMP:10412"/>
        <dbReference type="Rhea" id="RHEA-COMP:10413"/>
        <dbReference type="ChEBI" id="CHEBI:15378"/>
        <dbReference type="ChEBI" id="CHEBI:57856"/>
        <dbReference type="ChEBI" id="CHEBI:59789"/>
        <dbReference type="ChEBI" id="CHEBI:74269"/>
        <dbReference type="ChEBI" id="CHEBI:74481"/>
        <dbReference type="EC" id="2.1.1.242"/>
    </reaction>
</comment>
<comment type="subcellular location">
    <subcellularLocation>
        <location evidence="1">Cytoplasm</location>
    </subcellularLocation>
</comment>
<comment type="similarity">
    <text evidence="1">Belongs to the methyltransferase superfamily. RsmJ family.</text>
</comment>